<comment type="function">
    <text evidence="1">Tetrapolymerization of the monopyrrole PBG into the hydroxymethylbilane pre-uroporphyrinogen in several discrete steps.</text>
</comment>
<comment type="catalytic activity">
    <reaction evidence="1">
        <text>4 porphobilinogen + H2O = hydroxymethylbilane + 4 NH4(+)</text>
        <dbReference type="Rhea" id="RHEA:13185"/>
        <dbReference type="ChEBI" id="CHEBI:15377"/>
        <dbReference type="ChEBI" id="CHEBI:28938"/>
        <dbReference type="ChEBI" id="CHEBI:57845"/>
        <dbReference type="ChEBI" id="CHEBI:58126"/>
        <dbReference type="EC" id="2.5.1.61"/>
    </reaction>
</comment>
<comment type="cofactor">
    <cofactor evidence="1">
        <name>dipyrromethane</name>
        <dbReference type="ChEBI" id="CHEBI:60342"/>
    </cofactor>
    <text evidence="1">Binds 1 dipyrromethane group covalently.</text>
</comment>
<comment type="pathway">
    <text evidence="1">Porphyrin-containing compound metabolism; protoporphyrin-IX biosynthesis; coproporphyrinogen-III from 5-aminolevulinate: step 2/4.</text>
</comment>
<comment type="subunit">
    <text evidence="1">Monomer.</text>
</comment>
<comment type="miscellaneous">
    <text evidence="1">The porphobilinogen subunits are added to the dipyrromethane group.</text>
</comment>
<comment type="similarity">
    <text evidence="1">Belongs to the HMBS family.</text>
</comment>
<sequence length="306" mass="33494">MKVIKVGTRKSKLAMTQTQQLVDQLKALHPERDFVLVPYTTKGDRLTHVSLQEIGGKGVFVKEIERALLAGEINMAVHSLKDMPAKLAEGCALGAISQREDVRDCLIFRQAGQTLADLPKGSLIGTSSIRRQVQLQAQRPDLAFKPLRGNIDTRIKKLEEGEYDAIVLAMAGLKRLGWLDQSRLHIQPLETSLCLPAISQGALAVECREEDEELLSLLAAVQDEKTAAEVAVERAVLAQMNADCTFPIAAFAQKNGQGYQLEAMLAKEDGQCIFVSLQGQDGQQLAEQAVRQLADKGAVGMPWLKK</sequence>
<reference key="1">
    <citation type="journal article" date="2007" name="J. Bacteriol.">
        <title>Genome of the opportunistic pathogen Streptococcus sanguinis.</title>
        <authorList>
            <person name="Xu P."/>
            <person name="Alves J.M."/>
            <person name="Kitten T."/>
            <person name="Brown A."/>
            <person name="Chen Z."/>
            <person name="Ozaki L.S."/>
            <person name="Manque P."/>
            <person name="Ge X."/>
            <person name="Serrano M.G."/>
            <person name="Puiu D."/>
            <person name="Hendricks S."/>
            <person name="Wang Y."/>
            <person name="Chaplin M.D."/>
            <person name="Akan D."/>
            <person name="Paik S."/>
            <person name="Peterson D.L."/>
            <person name="Macrina F.L."/>
            <person name="Buck G.A."/>
        </authorList>
    </citation>
    <scope>NUCLEOTIDE SEQUENCE [LARGE SCALE GENOMIC DNA]</scope>
    <source>
        <strain>SK36</strain>
    </source>
</reference>
<name>HEM3_STRSV</name>
<gene>
    <name evidence="1" type="primary">hemC</name>
    <name type="ordered locus">SSA_0485</name>
</gene>
<dbReference type="EC" id="2.5.1.61" evidence="1"/>
<dbReference type="EMBL" id="CP000387">
    <property type="protein sequence ID" value="ABN43933.1"/>
    <property type="molecule type" value="Genomic_DNA"/>
</dbReference>
<dbReference type="RefSeq" id="WP_011836539.1">
    <property type="nucleotide sequence ID" value="NC_009009.1"/>
</dbReference>
<dbReference type="RefSeq" id="YP_001034483.1">
    <property type="nucleotide sequence ID" value="NC_009009.1"/>
</dbReference>
<dbReference type="SMR" id="A3CL78"/>
<dbReference type="STRING" id="388919.SSA_0485"/>
<dbReference type="KEGG" id="ssa:SSA_0485"/>
<dbReference type="PATRIC" id="fig|388919.9.peg.469"/>
<dbReference type="eggNOG" id="COG0181">
    <property type="taxonomic scope" value="Bacteria"/>
</dbReference>
<dbReference type="HOGENOM" id="CLU_019704_0_2_9"/>
<dbReference type="OrthoDB" id="9810298at2"/>
<dbReference type="UniPathway" id="UPA00251">
    <property type="reaction ID" value="UER00319"/>
</dbReference>
<dbReference type="Proteomes" id="UP000002148">
    <property type="component" value="Chromosome"/>
</dbReference>
<dbReference type="GO" id="GO:0005737">
    <property type="term" value="C:cytoplasm"/>
    <property type="evidence" value="ECO:0007669"/>
    <property type="project" value="TreeGrafter"/>
</dbReference>
<dbReference type="GO" id="GO:0004418">
    <property type="term" value="F:hydroxymethylbilane synthase activity"/>
    <property type="evidence" value="ECO:0007669"/>
    <property type="project" value="UniProtKB-UniRule"/>
</dbReference>
<dbReference type="GO" id="GO:0006782">
    <property type="term" value="P:protoporphyrinogen IX biosynthetic process"/>
    <property type="evidence" value="ECO:0007669"/>
    <property type="project" value="UniProtKB-UniRule"/>
</dbReference>
<dbReference type="FunFam" id="3.40.190.10:FF:000004">
    <property type="entry name" value="Porphobilinogen deaminase"/>
    <property type="match status" value="1"/>
</dbReference>
<dbReference type="FunFam" id="3.40.190.10:FF:000005">
    <property type="entry name" value="Porphobilinogen deaminase"/>
    <property type="match status" value="1"/>
</dbReference>
<dbReference type="Gene3D" id="3.40.190.10">
    <property type="entry name" value="Periplasmic binding protein-like II"/>
    <property type="match status" value="2"/>
</dbReference>
<dbReference type="Gene3D" id="3.30.160.40">
    <property type="entry name" value="Porphobilinogen deaminase, C-terminal domain"/>
    <property type="match status" value="1"/>
</dbReference>
<dbReference type="HAMAP" id="MF_00260">
    <property type="entry name" value="Porphobil_deam"/>
    <property type="match status" value="1"/>
</dbReference>
<dbReference type="InterPro" id="IPR000860">
    <property type="entry name" value="HemC"/>
</dbReference>
<dbReference type="InterPro" id="IPR022417">
    <property type="entry name" value="Porphobilin_deaminase_N"/>
</dbReference>
<dbReference type="InterPro" id="IPR022418">
    <property type="entry name" value="Porphobilinogen_deaminase_C"/>
</dbReference>
<dbReference type="InterPro" id="IPR036803">
    <property type="entry name" value="Porphobilinogen_deaminase_C_sf"/>
</dbReference>
<dbReference type="NCBIfam" id="TIGR00212">
    <property type="entry name" value="hemC"/>
    <property type="match status" value="1"/>
</dbReference>
<dbReference type="PANTHER" id="PTHR11557">
    <property type="entry name" value="PORPHOBILINOGEN DEAMINASE"/>
    <property type="match status" value="1"/>
</dbReference>
<dbReference type="PANTHER" id="PTHR11557:SF0">
    <property type="entry name" value="PORPHOBILINOGEN DEAMINASE"/>
    <property type="match status" value="1"/>
</dbReference>
<dbReference type="Pfam" id="PF01379">
    <property type="entry name" value="Porphobil_deam"/>
    <property type="match status" value="1"/>
</dbReference>
<dbReference type="Pfam" id="PF03900">
    <property type="entry name" value="Porphobil_deamC"/>
    <property type="match status" value="1"/>
</dbReference>
<dbReference type="PIRSF" id="PIRSF001438">
    <property type="entry name" value="4pyrrol_synth_OHMeBilane_synth"/>
    <property type="match status" value="1"/>
</dbReference>
<dbReference type="PRINTS" id="PR00151">
    <property type="entry name" value="PORPHBDMNASE"/>
</dbReference>
<dbReference type="SUPFAM" id="SSF53850">
    <property type="entry name" value="Periplasmic binding protein-like II"/>
    <property type="match status" value="1"/>
</dbReference>
<dbReference type="SUPFAM" id="SSF54782">
    <property type="entry name" value="Porphobilinogen deaminase (hydroxymethylbilane synthase), C-terminal domain"/>
    <property type="match status" value="1"/>
</dbReference>
<keyword id="KW-0627">Porphyrin biosynthesis</keyword>
<keyword id="KW-1185">Reference proteome</keyword>
<keyword id="KW-0808">Transferase</keyword>
<feature type="chain" id="PRO_1000190291" description="Porphobilinogen deaminase">
    <location>
        <begin position="1"/>
        <end position="306"/>
    </location>
</feature>
<feature type="modified residue" description="S-(dipyrrolylmethanemethyl)cysteine" evidence="1">
    <location>
        <position position="244"/>
    </location>
</feature>
<accession>A3CL78</accession>
<evidence type="ECO:0000255" key="1">
    <source>
        <dbReference type="HAMAP-Rule" id="MF_00260"/>
    </source>
</evidence>
<protein>
    <recommendedName>
        <fullName evidence="1">Porphobilinogen deaminase</fullName>
        <shortName evidence="1">PBG</shortName>
        <ecNumber evidence="1">2.5.1.61</ecNumber>
    </recommendedName>
    <alternativeName>
        <fullName evidence="1">Hydroxymethylbilane synthase</fullName>
        <shortName evidence="1">HMBS</shortName>
    </alternativeName>
    <alternativeName>
        <fullName evidence="1">Pre-uroporphyrinogen synthase</fullName>
    </alternativeName>
</protein>
<organism>
    <name type="scientific">Streptococcus sanguinis (strain SK36)</name>
    <dbReference type="NCBI Taxonomy" id="388919"/>
    <lineage>
        <taxon>Bacteria</taxon>
        <taxon>Bacillati</taxon>
        <taxon>Bacillota</taxon>
        <taxon>Bacilli</taxon>
        <taxon>Lactobacillales</taxon>
        <taxon>Streptococcaceae</taxon>
        <taxon>Streptococcus</taxon>
    </lineage>
</organism>
<proteinExistence type="inferred from homology"/>